<dbReference type="EMBL" id="CR859379">
    <property type="protein sequence ID" value="CAH91552.1"/>
    <property type="molecule type" value="mRNA"/>
</dbReference>
<dbReference type="RefSeq" id="NP_001125911.1">
    <property type="nucleotide sequence ID" value="NM_001132439.2"/>
</dbReference>
<dbReference type="BMRB" id="Q5R9K8"/>
<dbReference type="SMR" id="Q5R9K8"/>
<dbReference type="FunCoup" id="Q5R9K8">
    <property type="interactions" value="1991"/>
</dbReference>
<dbReference type="STRING" id="9601.ENSPPYP00000008341"/>
<dbReference type="Ensembl" id="ENSPPYT00000008682.2">
    <property type="protein sequence ID" value="ENSPPYP00000008341.1"/>
    <property type="gene ID" value="ENSPPYG00000007384.2"/>
</dbReference>
<dbReference type="GeneID" id="100172844"/>
<dbReference type="KEGG" id="pon:100172844"/>
<dbReference type="CTD" id="23568"/>
<dbReference type="eggNOG" id="ENOG502RYJD">
    <property type="taxonomic scope" value="Eukaryota"/>
</dbReference>
<dbReference type="GeneTree" id="ENSGT00390000015052"/>
<dbReference type="HOGENOM" id="CLU_116781_0_0_1"/>
<dbReference type="InParanoid" id="Q5R9K8"/>
<dbReference type="OMA" id="CILEIIM"/>
<dbReference type="OrthoDB" id="302784at2759"/>
<dbReference type="TreeFam" id="TF315143"/>
<dbReference type="Proteomes" id="UP000001595">
    <property type="component" value="Chromosome 16"/>
</dbReference>
<dbReference type="GO" id="GO:0005813">
    <property type="term" value="C:centrosome"/>
    <property type="evidence" value="ECO:0007669"/>
    <property type="project" value="UniProtKB-SubCell"/>
</dbReference>
<dbReference type="GO" id="GO:0036064">
    <property type="term" value="C:ciliary basal body"/>
    <property type="evidence" value="ECO:0007669"/>
    <property type="project" value="Ensembl"/>
</dbReference>
<dbReference type="GO" id="GO:0005829">
    <property type="term" value="C:cytosol"/>
    <property type="evidence" value="ECO:0007669"/>
    <property type="project" value="Ensembl"/>
</dbReference>
<dbReference type="GO" id="GO:0030496">
    <property type="term" value="C:midbody"/>
    <property type="evidence" value="ECO:0007669"/>
    <property type="project" value="Ensembl"/>
</dbReference>
<dbReference type="GO" id="GO:0005758">
    <property type="term" value="C:mitochondrial intermembrane space"/>
    <property type="evidence" value="ECO:0007669"/>
    <property type="project" value="UniProtKB-SubCell"/>
</dbReference>
<dbReference type="GO" id="GO:0005654">
    <property type="term" value="C:nucleoplasm"/>
    <property type="evidence" value="ECO:0007669"/>
    <property type="project" value="Ensembl"/>
</dbReference>
<dbReference type="GO" id="GO:0005819">
    <property type="term" value="C:spindle"/>
    <property type="evidence" value="ECO:0007669"/>
    <property type="project" value="UniProtKB-SubCell"/>
</dbReference>
<dbReference type="GO" id="GO:0003713">
    <property type="term" value="F:transcription coactivator activity"/>
    <property type="evidence" value="ECO:0000250"/>
    <property type="project" value="UniProtKB"/>
</dbReference>
<dbReference type="GO" id="GO:0051457">
    <property type="term" value="P:maintenance of protein location in nucleus"/>
    <property type="evidence" value="ECO:0000250"/>
    <property type="project" value="UniProtKB"/>
</dbReference>
<dbReference type="GO" id="GO:0042531">
    <property type="term" value="P:positive regulation of tyrosine phosphorylation of STAT protein"/>
    <property type="evidence" value="ECO:0000250"/>
    <property type="project" value="UniProtKB"/>
</dbReference>
<dbReference type="FunFam" id="1.20.1520.10:FF:000002">
    <property type="entry name" value="ADP-ribosylation factor-like protein 2-binding protein isoform X1"/>
    <property type="match status" value="1"/>
</dbReference>
<dbReference type="Gene3D" id="1.20.1520.10">
    <property type="entry name" value="ADP-ribosylation factor-like 2-binding protein, domain"/>
    <property type="match status" value="1"/>
</dbReference>
<dbReference type="InterPro" id="IPR038849">
    <property type="entry name" value="ARL2BP"/>
</dbReference>
<dbReference type="InterPro" id="IPR023379">
    <property type="entry name" value="BART_dom"/>
</dbReference>
<dbReference type="InterPro" id="IPR042541">
    <property type="entry name" value="BART_sf"/>
</dbReference>
<dbReference type="PANTHER" id="PTHR15487">
    <property type="entry name" value="ADP-RIBOSYLATION FACTOR-LIKE PROTEIN 2-BINDING PROTEIN"/>
    <property type="match status" value="1"/>
</dbReference>
<dbReference type="PANTHER" id="PTHR15487:SF4">
    <property type="entry name" value="ADP-RIBOSYLATION FACTOR-LIKE PROTEIN 2-BINDING PROTEIN"/>
    <property type="match status" value="1"/>
</dbReference>
<dbReference type="Pfam" id="PF11527">
    <property type="entry name" value="ARL2_Bind_BART"/>
    <property type="match status" value="1"/>
</dbReference>
<sequence length="163" mass="18852">MDALEEESFALSFSSTSDAEFDAVVGYLEDIIMDDEFQLLQRNFMDKYYLEFEDTEENKLIYTPIFNEYISLVEKYIEEQLLQRIPGFNMAAFTTTLQHHKDEVAGDIFDMLLTFTDFLAFKEMFLDYRAEKEGRGLDLSSGLVVTSLCKSSSLPASQNNLRH</sequence>
<gene>
    <name type="primary">ARL2BP</name>
</gene>
<name>AR2BP_PONAB</name>
<organism>
    <name type="scientific">Pongo abelii</name>
    <name type="common">Sumatran orangutan</name>
    <name type="synonym">Pongo pygmaeus abelii</name>
    <dbReference type="NCBI Taxonomy" id="9601"/>
    <lineage>
        <taxon>Eukaryota</taxon>
        <taxon>Metazoa</taxon>
        <taxon>Chordata</taxon>
        <taxon>Craniata</taxon>
        <taxon>Vertebrata</taxon>
        <taxon>Euteleostomi</taxon>
        <taxon>Mammalia</taxon>
        <taxon>Eutheria</taxon>
        <taxon>Euarchontoglires</taxon>
        <taxon>Primates</taxon>
        <taxon>Haplorrhini</taxon>
        <taxon>Catarrhini</taxon>
        <taxon>Hominidae</taxon>
        <taxon>Pongo</taxon>
    </lineage>
</organism>
<evidence type="ECO:0000250" key="1"/>
<evidence type="ECO:0000305" key="2"/>
<comment type="function">
    <text evidence="1">Together with ARL2, plays a role in the nuclear translocation, retention and transcriptional activity of STAT3. May play a role as an effector of ARL2 (By similarity).</text>
</comment>
<comment type="subunit">
    <text evidence="1">Interacts with GTP bound ARL2 and ARL3; the complex ARL2-ARL2BP as well as ARL2BP alone, binds to SLC25A4/ANT1. Interaction with ARL2 may be required for cilia basal body localization (By similarity). Interacts with STAT3; interaction is enhanced with ARL2. Found in a complex with ARL2BP, ARL2 and SLC25A6. Found in a complex with ARL2, ARL2BP and SLC25A4. Interacts with STAT2, STAT3 and STAT4.</text>
</comment>
<comment type="subcellular location">
    <subcellularLocation>
        <location evidence="1">Cytoplasm</location>
    </subcellularLocation>
    <subcellularLocation>
        <location evidence="1">Mitochondrion intermembrane space</location>
    </subcellularLocation>
    <subcellularLocation>
        <location evidence="1">Cytoplasm</location>
        <location evidence="1">Cytoskeleton</location>
        <location evidence="1">Microtubule organizing center</location>
        <location evidence="1">Centrosome</location>
    </subcellularLocation>
    <subcellularLocation>
        <location evidence="1">Nucleus</location>
    </subcellularLocation>
    <subcellularLocation>
        <location evidence="1">Cytoplasm</location>
        <location evidence="1">Cytoskeleton</location>
        <location evidence="1">Spindle</location>
    </subcellularLocation>
    <subcellularLocation>
        <location evidence="1">Cytoplasm</location>
        <location evidence="1">Cytoskeleton</location>
        <location evidence="1">Cilium basal body</location>
    </subcellularLocation>
    <text evidence="1">Detected in the midbody matrix. Not detected in the Golgi, nucleus and on the mitotic spindle. Centrosome-associated throughout the cell cycle. Not detected to interphase microtubules. In retina photoreceptor cells, localized in the distal connecting cilia, basal body, ciliary-associated centriole, and ciliary rootlet. Interaction with ARL2 may be required for cilia basal body localization (By similarity). The complex formed with ARL2BP, ARL2 and SLC25A4 is expressed in mitochondria (By similarity).</text>
</comment>
<comment type="similarity">
    <text evidence="2">Belongs to the ARL2BP family.</text>
</comment>
<protein>
    <recommendedName>
        <fullName>ADP-ribosylation factor-like protein 2-binding protein</fullName>
        <shortName>ARF-like 2-binding protein</shortName>
    </recommendedName>
</protein>
<feature type="chain" id="PRO_0000287116" description="ADP-ribosylation factor-like protein 2-binding protein">
    <location>
        <begin position="1"/>
        <end position="163"/>
    </location>
</feature>
<accession>Q5R9K8</accession>
<proteinExistence type="evidence at transcript level"/>
<reference key="1">
    <citation type="submission" date="2004-11" db="EMBL/GenBank/DDBJ databases">
        <authorList>
            <consortium name="The German cDNA consortium"/>
        </authorList>
    </citation>
    <scope>NUCLEOTIDE SEQUENCE [LARGE SCALE MRNA]</scope>
    <source>
        <tissue>Brain cortex</tissue>
    </source>
</reference>
<keyword id="KW-0966">Cell projection</keyword>
<keyword id="KW-0969">Cilium</keyword>
<keyword id="KW-0963">Cytoplasm</keyword>
<keyword id="KW-0206">Cytoskeleton</keyword>
<keyword id="KW-0496">Mitochondrion</keyword>
<keyword id="KW-0539">Nucleus</keyword>
<keyword id="KW-1185">Reference proteome</keyword>